<organism>
    <name type="scientific">Kosmotoga olearia (strain ATCC BAA-1733 / DSM 21960 / TBF 19.5.1)</name>
    <dbReference type="NCBI Taxonomy" id="521045"/>
    <lineage>
        <taxon>Bacteria</taxon>
        <taxon>Thermotogati</taxon>
        <taxon>Thermotogota</taxon>
        <taxon>Thermotogae</taxon>
        <taxon>Kosmotogales</taxon>
        <taxon>Kosmotogaceae</taxon>
        <taxon>Kosmotoga</taxon>
    </lineage>
</organism>
<protein>
    <recommendedName>
        <fullName evidence="1">Ribosome-binding factor A</fullName>
    </recommendedName>
</protein>
<evidence type="ECO:0000255" key="1">
    <source>
        <dbReference type="HAMAP-Rule" id="MF_00003"/>
    </source>
</evidence>
<feature type="chain" id="PRO_1000201637" description="Ribosome-binding factor A">
    <location>
        <begin position="1"/>
        <end position="125"/>
    </location>
</feature>
<reference key="1">
    <citation type="submission" date="2009-06" db="EMBL/GenBank/DDBJ databases">
        <title>Complete sequence of Thermotogales bacterium TBF 19.5.1.</title>
        <authorList>
            <consortium name="US DOE Joint Genome Institute"/>
            <person name="Lucas S."/>
            <person name="Copeland A."/>
            <person name="Lapidus A."/>
            <person name="Glavina del Rio T."/>
            <person name="Tice H."/>
            <person name="Bruce D."/>
            <person name="Goodwin L."/>
            <person name="Pitluck S."/>
            <person name="Chertkov O."/>
            <person name="Brettin T."/>
            <person name="Detter J.C."/>
            <person name="Han C."/>
            <person name="Schmutz J."/>
            <person name="Larimer F."/>
            <person name="Land M."/>
            <person name="Hauser L."/>
            <person name="Kyrpides N."/>
            <person name="Ovchinnikova G."/>
            <person name="Noll K."/>
        </authorList>
    </citation>
    <scope>NUCLEOTIDE SEQUENCE [LARGE SCALE GENOMIC DNA]</scope>
    <source>
        <strain>ATCC BAA-1733 / DSM 21960 / TBF 19.5.1</strain>
    </source>
</reference>
<proteinExistence type="inferred from homology"/>
<gene>
    <name evidence="1" type="primary">rbfA</name>
    <name type="ordered locus">Kole_2103</name>
</gene>
<comment type="function">
    <text evidence="1">One of several proteins that assist in the late maturation steps of the functional core of the 30S ribosomal subunit. Associates with free 30S ribosomal subunits (but not with 30S subunits that are part of 70S ribosomes or polysomes). Required for efficient processing of 16S rRNA. May interact with the 5'-terminal helix region of 16S rRNA.</text>
</comment>
<comment type="subunit">
    <text evidence="1">Monomer. Binds 30S ribosomal subunits, but not 50S ribosomal subunits or 70S ribosomes.</text>
</comment>
<comment type="subcellular location">
    <subcellularLocation>
        <location evidence="1">Cytoplasm</location>
    </subcellularLocation>
</comment>
<comment type="similarity">
    <text evidence="1">Belongs to the RbfA family.</text>
</comment>
<sequence>MSAGYRKAMLESEIQKVLTEALRNFKGESEIDPTLVSIVRIELSKDKRYANIFVSYLGNDEEKKKAVEFMEENKGYFRTAVAKNIRLFKAPELRFHEDIGIEASLRISKILEEIKKQEQEKEENE</sequence>
<dbReference type="EMBL" id="CP001634">
    <property type="protein sequence ID" value="ACR80780.1"/>
    <property type="molecule type" value="Genomic_DNA"/>
</dbReference>
<dbReference type="RefSeq" id="WP_015869421.1">
    <property type="nucleotide sequence ID" value="NC_012785.1"/>
</dbReference>
<dbReference type="SMR" id="C5CI78"/>
<dbReference type="STRING" id="521045.Kole_2103"/>
<dbReference type="KEGG" id="kol:Kole_2103"/>
<dbReference type="eggNOG" id="COG0858">
    <property type="taxonomic scope" value="Bacteria"/>
</dbReference>
<dbReference type="HOGENOM" id="CLU_089475_6_5_0"/>
<dbReference type="OrthoDB" id="46605at2"/>
<dbReference type="Proteomes" id="UP000002382">
    <property type="component" value="Chromosome"/>
</dbReference>
<dbReference type="GO" id="GO:0005829">
    <property type="term" value="C:cytosol"/>
    <property type="evidence" value="ECO:0007669"/>
    <property type="project" value="TreeGrafter"/>
</dbReference>
<dbReference type="GO" id="GO:0043024">
    <property type="term" value="F:ribosomal small subunit binding"/>
    <property type="evidence" value="ECO:0007669"/>
    <property type="project" value="TreeGrafter"/>
</dbReference>
<dbReference type="GO" id="GO:0030490">
    <property type="term" value="P:maturation of SSU-rRNA"/>
    <property type="evidence" value="ECO:0007669"/>
    <property type="project" value="UniProtKB-UniRule"/>
</dbReference>
<dbReference type="Gene3D" id="3.30.300.20">
    <property type="match status" value="1"/>
</dbReference>
<dbReference type="HAMAP" id="MF_00003">
    <property type="entry name" value="RbfA"/>
    <property type="match status" value="1"/>
</dbReference>
<dbReference type="InterPro" id="IPR015946">
    <property type="entry name" value="KH_dom-like_a/b"/>
</dbReference>
<dbReference type="InterPro" id="IPR000238">
    <property type="entry name" value="RbfA"/>
</dbReference>
<dbReference type="InterPro" id="IPR023799">
    <property type="entry name" value="RbfA_dom_sf"/>
</dbReference>
<dbReference type="InterPro" id="IPR020053">
    <property type="entry name" value="Ribosome-bd_factorA_CS"/>
</dbReference>
<dbReference type="NCBIfam" id="TIGR00082">
    <property type="entry name" value="rbfA"/>
    <property type="match status" value="1"/>
</dbReference>
<dbReference type="PANTHER" id="PTHR33515">
    <property type="entry name" value="RIBOSOME-BINDING FACTOR A, CHLOROPLASTIC-RELATED"/>
    <property type="match status" value="1"/>
</dbReference>
<dbReference type="PANTHER" id="PTHR33515:SF1">
    <property type="entry name" value="RIBOSOME-BINDING FACTOR A, CHLOROPLASTIC-RELATED"/>
    <property type="match status" value="1"/>
</dbReference>
<dbReference type="Pfam" id="PF02033">
    <property type="entry name" value="RBFA"/>
    <property type="match status" value="1"/>
</dbReference>
<dbReference type="SUPFAM" id="SSF89919">
    <property type="entry name" value="Ribosome-binding factor A, RbfA"/>
    <property type="match status" value="1"/>
</dbReference>
<dbReference type="PROSITE" id="PS01319">
    <property type="entry name" value="RBFA"/>
    <property type="match status" value="1"/>
</dbReference>
<name>RBFA_KOSOT</name>
<keyword id="KW-0963">Cytoplasm</keyword>
<keyword id="KW-1185">Reference proteome</keyword>
<keyword id="KW-0690">Ribosome biogenesis</keyword>
<accession>C5CI78</accession>